<reference key="1">
    <citation type="journal article" date="2014" name="Stand. Genomic Sci.">
        <title>Complete genome sequence of Burkholderia phymatum STM815(T), a broad host range and efficient nitrogen-fixing symbiont of Mimosa species.</title>
        <authorList>
            <person name="Moulin L."/>
            <person name="Klonowska A."/>
            <person name="Caroline B."/>
            <person name="Booth K."/>
            <person name="Vriezen J.A."/>
            <person name="Melkonian R."/>
            <person name="James E.K."/>
            <person name="Young J.P."/>
            <person name="Bena G."/>
            <person name="Hauser L."/>
            <person name="Land M."/>
            <person name="Kyrpides N."/>
            <person name="Bruce D."/>
            <person name="Chain P."/>
            <person name="Copeland A."/>
            <person name="Pitluck S."/>
            <person name="Woyke T."/>
            <person name="Lizotte-Waniewski M."/>
            <person name="Bristow J."/>
            <person name="Riley M."/>
        </authorList>
    </citation>
    <scope>NUCLEOTIDE SEQUENCE [LARGE SCALE GENOMIC DNA]</scope>
    <source>
        <strain>DSM 17167 / CIP 108236 / LMG 21445 / STM815</strain>
    </source>
</reference>
<gene>
    <name evidence="1" type="primary">rpmG</name>
    <name type="ordered locus">Bphy_0583</name>
</gene>
<organism>
    <name type="scientific">Paraburkholderia phymatum (strain DSM 17167 / CIP 108236 / LMG 21445 / STM815)</name>
    <name type="common">Burkholderia phymatum</name>
    <dbReference type="NCBI Taxonomy" id="391038"/>
    <lineage>
        <taxon>Bacteria</taxon>
        <taxon>Pseudomonadati</taxon>
        <taxon>Pseudomonadota</taxon>
        <taxon>Betaproteobacteria</taxon>
        <taxon>Burkholderiales</taxon>
        <taxon>Burkholderiaceae</taxon>
        <taxon>Paraburkholderia</taxon>
    </lineage>
</organism>
<dbReference type="EMBL" id="CP001043">
    <property type="protein sequence ID" value="ACC69774.1"/>
    <property type="molecule type" value="Genomic_DNA"/>
</dbReference>
<dbReference type="RefSeq" id="WP_004185395.1">
    <property type="nucleotide sequence ID" value="NZ_CADFGH010000001.1"/>
</dbReference>
<dbReference type="SMR" id="B2JDZ8"/>
<dbReference type="STRING" id="391038.Bphy_0583"/>
<dbReference type="GeneID" id="95550920"/>
<dbReference type="KEGG" id="bph:Bphy_0583"/>
<dbReference type="eggNOG" id="COG0267">
    <property type="taxonomic scope" value="Bacteria"/>
</dbReference>
<dbReference type="HOGENOM" id="CLU_190949_1_1_4"/>
<dbReference type="OrthoDB" id="21586at2"/>
<dbReference type="Proteomes" id="UP000001192">
    <property type="component" value="Chromosome 1"/>
</dbReference>
<dbReference type="GO" id="GO:0022625">
    <property type="term" value="C:cytosolic large ribosomal subunit"/>
    <property type="evidence" value="ECO:0007669"/>
    <property type="project" value="TreeGrafter"/>
</dbReference>
<dbReference type="GO" id="GO:0003735">
    <property type="term" value="F:structural constituent of ribosome"/>
    <property type="evidence" value="ECO:0007669"/>
    <property type="project" value="InterPro"/>
</dbReference>
<dbReference type="GO" id="GO:0006412">
    <property type="term" value="P:translation"/>
    <property type="evidence" value="ECO:0007669"/>
    <property type="project" value="UniProtKB-UniRule"/>
</dbReference>
<dbReference type="FunFam" id="2.20.28.120:FF:000001">
    <property type="entry name" value="50S ribosomal protein L33"/>
    <property type="match status" value="1"/>
</dbReference>
<dbReference type="Gene3D" id="2.20.28.120">
    <property type="entry name" value="Ribosomal protein L33"/>
    <property type="match status" value="1"/>
</dbReference>
<dbReference type="HAMAP" id="MF_00294">
    <property type="entry name" value="Ribosomal_bL33"/>
    <property type="match status" value="1"/>
</dbReference>
<dbReference type="InterPro" id="IPR001705">
    <property type="entry name" value="Ribosomal_bL33"/>
</dbReference>
<dbReference type="InterPro" id="IPR018264">
    <property type="entry name" value="Ribosomal_bL33_CS"/>
</dbReference>
<dbReference type="InterPro" id="IPR038584">
    <property type="entry name" value="Ribosomal_bL33_sf"/>
</dbReference>
<dbReference type="InterPro" id="IPR011332">
    <property type="entry name" value="Ribosomal_zn-bd"/>
</dbReference>
<dbReference type="NCBIfam" id="NF001860">
    <property type="entry name" value="PRK00595.1"/>
    <property type="match status" value="1"/>
</dbReference>
<dbReference type="NCBIfam" id="TIGR01023">
    <property type="entry name" value="rpmG_bact"/>
    <property type="match status" value="1"/>
</dbReference>
<dbReference type="PANTHER" id="PTHR15238">
    <property type="entry name" value="54S RIBOSOMAL PROTEIN L39, MITOCHONDRIAL"/>
    <property type="match status" value="1"/>
</dbReference>
<dbReference type="PANTHER" id="PTHR15238:SF1">
    <property type="entry name" value="LARGE RIBOSOMAL SUBUNIT PROTEIN BL33M"/>
    <property type="match status" value="1"/>
</dbReference>
<dbReference type="Pfam" id="PF00471">
    <property type="entry name" value="Ribosomal_L33"/>
    <property type="match status" value="1"/>
</dbReference>
<dbReference type="SUPFAM" id="SSF57829">
    <property type="entry name" value="Zn-binding ribosomal proteins"/>
    <property type="match status" value="1"/>
</dbReference>
<dbReference type="PROSITE" id="PS00582">
    <property type="entry name" value="RIBOSOMAL_L33"/>
    <property type="match status" value="1"/>
</dbReference>
<feature type="chain" id="PRO_1000115115" description="Large ribosomal subunit protein bL33">
    <location>
        <begin position="1"/>
        <end position="55"/>
    </location>
</feature>
<feature type="region of interest" description="Disordered" evidence="2">
    <location>
        <begin position="1"/>
        <end position="24"/>
    </location>
</feature>
<feature type="compositionally biased region" description="Basic and acidic residues" evidence="2">
    <location>
        <begin position="1"/>
        <end position="11"/>
    </location>
</feature>
<feature type="compositionally biased region" description="Polar residues" evidence="2">
    <location>
        <begin position="14"/>
        <end position="24"/>
    </location>
</feature>
<keyword id="KW-1185">Reference proteome</keyword>
<keyword id="KW-0687">Ribonucleoprotein</keyword>
<keyword id="KW-0689">Ribosomal protein</keyword>
<protein>
    <recommendedName>
        <fullName evidence="1">Large ribosomal subunit protein bL33</fullName>
    </recommendedName>
    <alternativeName>
        <fullName evidence="3">50S ribosomal protein L33</fullName>
    </alternativeName>
</protein>
<comment type="similarity">
    <text evidence="1">Belongs to the bacterial ribosomal protein bL33 family.</text>
</comment>
<sequence length="55" mass="6356">MAKGARDKIKLESTAGTGHFYTTTKNKRNMPEKMEIMKFDPVARKHVAYKETKIK</sequence>
<proteinExistence type="inferred from homology"/>
<accession>B2JDZ8</accession>
<evidence type="ECO:0000255" key="1">
    <source>
        <dbReference type="HAMAP-Rule" id="MF_00294"/>
    </source>
</evidence>
<evidence type="ECO:0000256" key="2">
    <source>
        <dbReference type="SAM" id="MobiDB-lite"/>
    </source>
</evidence>
<evidence type="ECO:0000305" key="3"/>
<name>RL33_PARP8</name>